<sequence>GSSGMISFPRT</sequence>
<accession>P85582</accession>
<keyword id="KW-0027">Amidation</keyword>
<keyword id="KW-0903">Direct protein sequencing</keyword>
<keyword id="KW-0527">Neuropeptide</keyword>
<keyword id="KW-0964">Secreted</keyword>
<protein>
    <recommendedName>
        <fullName evidence="3">Periviscerokinin-3</fullName>
        <shortName evidence="3">DerCr-PVK-3</shortName>
    </recommendedName>
</protein>
<organism>
    <name type="scientific">Derocalymma cruralis</name>
    <name type="common">African cockroach</name>
    <dbReference type="NCBI Taxonomy" id="344972"/>
    <lineage>
        <taxon>Eukaryota</taxon>
        <taxon>Metazoa</taxon>
        <taxon>Ecdysozoa</taxon>
        <taxon>Arthropoda</taxon>
        <taxon>Hexapoda</taxon>
        <taxon>Insecta</taxon>
        <taxon>Pterygota</taxon>
        <taxon>Neoptera</taxon>
        <taxon>Polyneoptera</taxon>
        <taxon>Dictyoptera</taxon>
        <taxon>Blattodea</taxon>
        <taxon>Blaberoidea</taxon>
        <taxon>Blaberidae</taxon>
        <taxon>Perisphaerinae</taxon>
        <taxon>Derocalymma</taxon>
    </lineage>
</organism>
<evidence type="ECO:0000255" key="1"/>
<evidence type="ECO:0000269" key="2">
    <source>
    </source>
</evidence>
<evidence type="ECO:0000303" key="3">
    <source>
    </source>
</evidence>
<evidence type="ECO:0000305" key="4"/>
<comment type="function">
    <text evidence="4">Mediates visceral muscle contractile activity (myotropic activity).</text>
</comment>
<comment type="subcellular location">
    <subcellularLocation>
        <location evidence="4">Secreted</location>
    </subcellularLocation>
</comment>
<comment type="similarity">
    <text evidence="1">Belongs to the periviscerokinin family.</text>
</comment>
<dbReference type="GO" id="GO:0005576">
    <property type="term" value="C:extracellular region"/>
    <property type="evidence" value="ECO:0007669"/>
    <property type="project" value="UniProtKB-SubCell"/>
</dbReference>
<dbReference type="GO" id="GO:0007218">
    <property type="term" value="P:neuropeptide signaling pathway"/>
    <property type="evidence" value="ECO:0007669"/>
    <property type="project" value="UniProtKB-KW"/>
</dbReference>
<dbReference type="InterPro" id="IPR013231">
    <property type="entry name" value="Periviscerokinin"/>
</dbReference>
<dbReference type="Pfam" id="PF08259">
    <property type="entry name" value="Periviscerokin"/>
    <property type="match status" value="1"/>
</dbReference>
<proteinExistence type="evidence at protein level"/>
<feature type="peptide" id="PRO_0000378825" description="Periviscerokinin-3" evidence="2">
    <location>
        <begin position="1"/>
        <end position="11"/>
    </location>
</feature>
<feature type="modified residue" description="Threonine amide" evidence="2">
    <location>
        <position position="11"/>
    </location>
</feature>
<name>PVK3_DERCR</name>
<reference evidence="4" key="1">
    <citation type="journal article" date="2009" name="BMC Evol. Biol.">
        <title>A proteomic approach for studying insect phylogeny: CAPA peptides of ancient insect taxa (Dictyoptera, Blattoptera) as a test case.</title>
        <authorList>
            <person name="Roth S."/>
            <person name="Fromm B."/>
            <person name="Gaede G."/>
            <person name="Predel R."/>
        </authorList>
    </citation>
    <scope>PROTEIN SEQUENCE</scope>
    <scope>AMIDATION AT THR-11</scope>
    <source>
        <tissue evidence="2">Abdominal perisympathetic organs</tissue>
    </source>
</reference>